<gene>
    <name evidence="1" type="primary">glmM</name>
    <name type="ordered locus">CF0224</name>
</gene>
<dbReference type="EC" id="5.4.2.10" evidence="1"/>
<dbReference type="EMBL" id="AP006861">
    <property type="protein sequence ID" value="BAE80996.1"/>
    <property type="molecule type" value="Genomic_DNA"/>
</dbReference>
<dbReference type="RefSeq" id="WP_011457778.1">
    <property type="nucleotide sequence ID" value="NC_007899.1"/>
</dbReference>
<dbReference type="SMR" id="Q255P2"/>
<dbReference type="STRING" id="264202.CF0224"/>
<dbReference type="KEGG" id="cfe:CF0224"/>
<dbReference type="eggNOG" id="COG1109">
    <property type="taxonomic scope" value="Bacteria"/>
</dbReference>
<dbReference type="HOGENOM" id="CLU_016950_7_0_0"/>
<dbReference type="OrthoDB" id="9806956at2"/>
<dbReference type="Proteomes" id="UP000001260">
    <property type="component" value="Chromosome"/>
</dbReference>
<dbReference type="GO" id="GO:0005829">
    <property type="term" value="C:cytosol"/>
    <property type="evidence" value="ECO:0007669"/>
    <property type="project" value="TreeGrafter"/>
</dbReference>
<dbReference type="GO" id="GO:0000287">
    <property type="term" value="F:magnesium ion binding"/>
    <property type="evidence" value="ECO:0007669"/>
    <property type="project" value="UniProtKB-UniRule"/>
</dbReference>
<dbReference type="GO" id="GO:0008966">
    <property type="term" value="F:phosphoglucosamine mutase activity"/>
    <property type="evidence" value="ECO:0007669"/>
    <property type="project" value="UniProtKB-UniRule"/>
</dbReference>
<dbReference type="GO" id="GO:0004615">
    <property type="term" value="F:phosphomannomutase activity"/>
    <property type="evidence" value="ECO:0007669"/>
    <property type="project" value="TreeGrafter"/>
</dbReference>
<dbReference type="GO" id="GO:0005975">
    <property type="term" value="P:carbohydrate metabolic process"/>
    <property type="evidence" value="ECO:0007669"/>
    <property type="project" value="InterPro"/>
</dbReference>
<dbReference type="GO" id="GO:0009252">
    <property type="term" value="P:peptidoglycan biosynthetic process"/>
    <property type="evidence" value="ECO:0007669"/>
    <property type="project" value="TreeGrafter"/>
</dbReference>
<dbReference type="GO" id="GO:0006048">
    <property type="term" value="P:UDP-N-acetylglucosamine biosynthetic process"/>
    <property type="evidence" value="ECO:0007669"/>
    <property type="project" value="TreeGrafter"/>
</dbReference>
<dbReference type="CDD" id="cd05802">
    <property type="entry name" value="GlmM"/>
    <property type="match status" value="1"/>
</dbReference>
<dbReference type="FunFam" id="3.30.310.50:FF:000001">
    <property type="entry name" value="Phosphoglucosamine mutase"/>
    <property type="match status" value="1"/>
</dbReference>
<dbReference type="FunFam" id="3.40.120.10:FF:000001">
    <property type="entry name" value="Phosphoglucosamine mutase"/>
    <property type="match status" value="1"/>
</dbReference>
<dbReference type="FunFam" id="3.40.120.10:FF:000003">
    <property type="entry name" value="Phosphoglucosamine mutase"/>
    <property type="match status" value="1"/>
</dbReference>
<dbReference type="Gene3D" id="3.40.120.10">
    <property type="entry name" value="Alpha-D-Glucose-1,6-Bisphosphate, subunit A, domain 3"/>
    <property type="match status" value="3"/>
</dbReference>
<dbReference type="Gene3D" id="3.30.310.50">
    <property type="entry name" value="Alpha-D-phosphohexomutase, C-terminal domain"/>
    <property type="match status" value="1"/>
</dbReference>
<dbReference type="HAMAP" id="MF_01554_B">
    <property type="entry name" value="GlmM_B"/>
    <property type="match status" value="1"/>
</dbReference>
<dbReference type="InterPro" id="IPR005844">
    <property type="entry name" value="A-D-PHexomutase_a/b/a-I"/>
</dbReference>
<dbReference type="InterPro" id="IPR016055">
    <property type="entry name" value="A-D-PHexomutase_a/b/a-I/II/III"/>
</dbReference>
<dbReference type="InterPro" id="IPR005845">
    <property type="entry name" value="A-D-PHexomutase_a/b/a-II"/>
</dbReference>
<dbReference type="InterPro" id="IPR005846">
    <property type="entry name" value="A-D-PHexomutase_a/b/a-III"/>
</dbReference>
<dbReference type="InterPro" id="IPR005843">
    <property type="entry name" value="A-D-PHexomutase_C"/>
</dbReference>
<dbReference type="InterPro" id="IPR036900">
    <property type="entry name" value="A-D-PHexomutase_C_sf"/>
</dbReference>
<dbReference type="InterPro" id="IPR016066">
    <property type="entry name" value="A-D-PHexomutase_CS"/>
</dbReference>
<dbReference type="InterPro" id="IPR005841">
    <property type="entry name" value="Alpha-D-phosphohexomutase_SF"/>
</dbReference>
<dbReference type="InterPro" id="IPR006352">
    <property type="entry name" value="GlmM_bact"/>
</dbReference>
<dbReference type="InterPro" id="IPR050060">
    <property type="entry name" value="Phosphoglucosamine_mutase"/>
</dbReference>
<dbReference type="NCBIfam" id="TIGR01455">
    <property type="entry name" value="glmM"/>
    <property type="match status" value="1"/>
</dbReference>
<dbReference type="NCBIfam" id="NF008139">
    <property type="entry name" value="PRK10887.1"/>
    <property type="match status" value="1"/>
</dbReference>
<dbReference type="PANTHER" id="PTHR42946:SF1">
    <property type="entry name" value="PHOSPHOGLUCOMUTASE (ALPHA-D-GLUCOSE-1,6-BISPHOSPHATE-DEPENDENT)"/>
    <property type="match status" value="1"/>
</dbReference>
<dbReference type="PANTHER" id="PTHR42946">
    <property type="entry name" value="PHOSPHOHEXOSE MUTASE"/>
    <property type="match status" value="1"/>
</dbReference>
<dbReference type="Pfam" id="PF02878">
    <property type="entry name" value="PGM_PMM_I"/>
    <property type="match status" value="1"/>
</dbReference>
<dbReference type="Pfam" id="PF02879">
    <property type="entry name" value="PGM_PMM_II"/>
    <property type="match status" value="1"/>
</dbReference>
<dbReference type="Pfam" id="PF02880">
    <property type="entry name" value="PGM_PMM_III"/>
    <property type="match status" value="1"/>
</dbReference>
<dbReference type="Pfam" id="PF00408">
    <property type="entry name" value="PGM_PMM_IV"/>
    <property type="match status" value="1"/>
</dbReference>
<dbReference type="PRINTS" id="PR00509">
    <property type="entry name" value="PGMPMM"/>
</dbReference>
<dbReference type="SUPFAM" id="SSF55957">
    <property type="entry name" value="Phosphoglucomutase, C-terminal domain"/>
    <property type="match status" value="1"/>
</dbReference>
<dbReference type="SUPFAM" id="SSF53738">
    <property type="entry name" value="Phosphoglucomutase, first 3 domains"/>
    <property type="match status" value="3"/>
</dbReference>
<dbReference type="PROSITE" id="PS00710">
    <property type="entry name" value="PGM_PMM"/>
    <property type="match status" value="1"/>
</dbReference>
<comment type="function">
    <text evidence="1">Catalyzes the conversion of glucosamine-6-phosphate to glucosamine-1-phosphate.</text>
</comment>
<comment type="catalytic activity">
    <reaction evidence="1">
        <text>alpha-D-glucosamine 1-phosphate = D-glucosamine 6-phosphate</text>
        <dbReference type="Rhea" id="RHEA:23424"/>
        <dbReference type="ChEBI" id="CHEBI:58516"/>
        <dbReference type="ChEBI" id="CHEBI:58725"/>
        <dbReference type="EC" id="5.4.2.10"/>
    </reaction>
</comment>
<comment type="cofactor">
    <cofactor evidence="1">
        <name>Mg(2+)</name>
        <dbReference type="ChEBI" id="CHEBI:18420"/>
    </cofactor>
    <text evidence="1">Binds 1 Mg(2+) ion per subunit.</text>
</comment>
<comment type="PTM">
    <text evidence="1">Activated by phosphorylation.</text>
</comment>
<comment type="similarity">
    <text evidence="1">Belongs to the phosphohexose mutase family.</text>
</comment>
<proteinExistence type="inferred from homology"/>
<evidence type="ECO:0000255" key="1">
    <source>
        <dbReference type="HAMAP-Rule" id="MF_01554"/>
    </source>
</evidence>
<keyword id="KW-0413">Isomerase</keyword>
<keyword id="KW-0460">Magnesium</keyword>
<keyword id="KW-0479">Metal-binding</keyword>
<keyword id="KW-0597">Phosphoprotein</keyword>
<accession>Q255P2</accession>
<organism>
    <name type="scientific">Chlamydia felis (strain Fe/C-56)</name>
    <name type="common">Chlamydophila felis</name>
    <dbReference type="NCBI Taxonomy" id="264202"/>
    <lineage>
        <taxon>Bacteria</taxon>
        <taxon>Pseudomonadati</taxon>
        <taxon>Chlamydiota</taxon>
        <taxon>Chlamydiia</taxon>
        <taxon>Chlamydiales</taxon>
        <taxon>Chlamydiaceae</taxon>
        <taxon>Chlamydia/Chlamydophila group</taxon>
        <taxon>Chlamydia</taxon>
    </lineage>
</organism>
<feature type="chain" id="PRO_0000301299" description="Phosphoglucosamine mutase">
    <location>
        <begin position="1"/>
        <end position="458"/>
    </location>
</feature>
<feature type="active site" description="Phosphoserine intermediate" evidence="1">
    <location>
        <position position="106"/>
    </location>
</feature>
<feature type="binding site" description="via phosphate group" evidence="1">
    <location>
        <position position="106"/>
    </location>
    <ligand>
        <name>Mg(2+)</name>
        <dbReference type="ChEBI" id="CHEBI:18420"/>
    </ligand>
</feature>
<feature type="binding site" evidence="1">
    <location>
        <position position="247"/>
    </location>
    <ligand>
        <name>Mg(2+)</name>
        <dbReference type="ChEBI" id="CHEBI:18420"/>
    </ligand>
</feature>
<feature type="binding site" evidence="1">
    <location>
        <position position="249"/>
    </location>
    <ligand>
        <name>Mg(2+)</name>
        <dbReference type="ChEBI" id="CHEBI:18420"/>
    </ligand>
</feature>
<feature type="binding site" evidence="1">
    <location>
        <position position="251"/>
    </location>
    <ligand>
        <name>Mg(2+)</name>
        <dbReference type="ChEBI" id="CHEBI:18420"/>
    </ligand>
</feature>
<feature type="modified residue" description="Phosphoserine" evidence="1">
    <location>
        <position position="106"/>
    </location>
</feature>
<reference key="1">
    <citation type="journal article" date="2006" name="DNA Res.">
        <title>Genome sequence of the cat pathogen, Chlamydophila felis.</title>
        <authorList>
            <person name="Azuma Y."/>
            <person name="Hirakawa H."/>
            <person name="Yamashita A."/>
            <person name="Cai Y."/>
            <person name="Rahman M.A."/>
            <person name="Suzuki H."/>
            <person name="Mitaku S."/>
            <person name="Toh H."/>
            <person name="Goto S."/>
            <person name="Murakami T."/>
            <person name="Sugi K."/>
            <person name="Hayashi H."/>
            <person name="Fukushi H."/>
            <person name="Hattori M."/>
            <person name="Kuhara S."/>
            <person name="Shirai M."/>
        </authorList>
    </citation>
    <scope>NUCLEOTIDE SEQUENCE [LARGE SCALE GENOMIC DNA]</scope>
    <source>
        <strain>Fe/C-56</strain>
    </source>
</reference>
<name>GLMM_CHLFF</name>
<protein>
    <recommendedName>
        <fullName evidence="1">Phosphoglucosamine mutase</fullName>
        <ecNumber evidence="1">5.4.2.10</ecNumber>
    </recommendedName>
</protein>
<sequence length="458" mass="49681">MTREIKPLFGTDGVRGRANHEPMTVEMSVLLGKAVAGVLQECKPGRHRVVVGKDTRLSGYMFENALIAGLTSMGIETLVLGPIPTPGVAFITRAYRADAGIMISASHNPYWDNGIKIFSSEGFKISDVIERRIEQMVAFKEFGNLPEDYAVGKNKRVVDAMGRYIEFAKATFPRGRTLNGLKIVLDCAHGAAYKVAPSVFEELDAEVICYGCEPTGSNINDNCGALFPSVIQKAVIEHKADVGIALDGDGDRIIMVNEKGHIVDGDMILSICANDLKKKGILHGNRIVATVMTNFGVLKYLENVGIDTLISPVGDRHVLQNMLEYEANLGGEQSGHMIFLDYNTTGDGIVSALQVLRIMIESESTLSDLTSPIVKSPQALINVAVKEKIPLDTLPLVQEALRDVRSSLGDSGRVLLRYSGTENICRVMVEGLKKHQVDSLAKTIADIVDSELGVGIIE</sequence>